<reference key="1">
    <citation type="journal article" date="2004" name="Proc. Natl. Acad. Sci. U.S.A.">
        <title>The louse-borne human pathogen Bartonella quintana is a genomic derivative of the zoonotic agent Bartonella henselae.</title>
        <authorList>
            <person name="Alsmark U.C.M."/>
            <person name="Frank A.C."/>
            <person name="Karlberg E.O."/>
            <person name="Legault B.-A."/>
            <person name="Ardell D.H."/>
            <person name="Canbaeck B."/>
            <person name="Eriksson A.-S."/>
            <person name="Naeslund A.K."/>
            <person name="Handley S.A."/>
            <person name="Huvet M."/>
            <person name="La Scola B."/>
            <person name="Holmberg M."/>
            <person name="Andersson S.G.E."/>
        </authorList>
    </citation>
    <scope>NUCLEOTIDE SEQUENCE [LARGE SCALE GENOMIC DNA]</scope>
    <source>
        <strain>ATCC 49882 / DSM 28221 / CCUG 30454 / Houston 1</strain>
    </source>
</reference>
<comment type="function">
    <text evidence="1">Catalyzes the transfer of the enolpyruvyl moiety of phosphoenolpyruvate (PEP) to the 5-hydroxyl of shikimate-3-phosphate (S3P) to produce enolpyruvyl shikimate-3-phosphate and inorganic phosphate.</text>
</comment>
<comment type="catalytic activity">
    <reaction evidence="1">
        <text>3-phosphoshikimate + phosphoenolpyruvate = 5-O-(1-carboxyvinyl)-3-phosphoshikimate + phosphate</text>
        <dbReference type="Rhea" id="RHEA:21256"/>
        <dbReference type="ChEBI" id="CHEBI:43474"/>
        <dbReference type="ChEBI" id="CHEBI:57701"/>
        <dbReference type="ChEBI" id="CHEBI:58702"/>
        <dbReference type="ChEBI" id="CHEBI:145989"/>
        <dbReference type="EC" id="2.5.1.19"/>
    </reaction>
    <physiologicalReaction direction="left-to-right" evidence="1">
        <dbReference type="Rhea" id="RHEA:21257"/>
    </physiologicalReaction>
</comment>
<comment type="pathway">
    <text evidence="1">Metabolic intermediate biosynthesis; chorismate biosynthesis; chorismate from D-erythrose 4-phosphate and phosphoenolpyruvate: step 6/7.</text>
</comment>
<comment type="subunit">
    <text evidence="1">Monomer.</text>
</comment>
<comment type="subcellular location">
    <subcellularLocation>
        <location evidence="1">Cytoplasm</location>
    </subcellularLocation>
</comment>
<comment type="similarity">
    <text evidence="1">Belongs to the EPSP synthase family.</text>
</comment>
<dbReference type="EC" id="2.5.1.19" evidence="1"/>
<dbReference type="EMBL" id="BX897699">
    <property type="protein sequence ID" value="CAF26911.1"/>
    <property type="molecule type" value="Genomic_DNA"/>
</dbReference>
<dbReference type="RefSeq" id="WP_011180056.1">
    <property type="nucleotide sequence ID" value="NZ_LRIJ02000001.1"/>
</dbReference>
<dbReference type="SMR" id="Q6G545"/>
<dbReference type="PaxDb" id="283166-BH00950"/>
<dbReference type="EnsemblBacteria" id="CAF26911">
    <property type="protein sequence ID" value="CAF26911"/>
    <property type="gene ID" value="BH00950"/>
</dbReference>
<dbReference type="GeneID" id="92986381"/>
<dbReference type="KEGG" id="bhe:BH00950"/>
<dbReference type="eggNOG" id="COG0128">
    <property type="taxonomic scope" value="Bacteria"/>
</dbReference>
<dbReference type="OrthoDB" id="9809920at2"/>
<dbReference type="UniPathway" id="UPA00053">
    <property type="reaction ID" value="UER00089"/>
</dbReference>
<dbReference type="Proteomes" id="UP000000421">
    <property type="component" value="Chromosome"/>
</dbReference>
<dbReference type="GO" id="GO:0005737">
    <property type="term" value="C:cytoplasm"/>
    <property type="evidence" value="ECO:0007669"/>
    <property type="project" value="UniProtKB-SubCell"/>
</dbReference>
<dbReference type="GO" id="GO:0003866">
    <property type="term" value="F:3-phosphoshikimate 1-carboxyvinyltransferase activity"/>
    <property type="evidence" value="ECO:0007669"/>
    <property type="project" value="UniProtKB-UniRule"/>
</dbReference>
<dbReference type="GO" id="GO:0008652">
    <property type="term" value="P:amino acid biosynthetic process"/>
    <property type="evidence" value="ECO:0007669"/>
    <property type="project" value="UniProtKB-KW"/>
</dbReference>
<dbReference type="GO" id="GO:0009073">
    <property type="term" value="P:aromatic amino acid family biosynthetic process"/>
    <property type="evidence" value="ECO:0007669"/>
    <property type="project" value="UniProtKB-KW"/>
</dbReference>
<dbReference type="GO" id="GO:0009423">
    <property type="term" value="P:chorismate biosynthetic process"/>
    <property type="evidence" value="ECO:0007669"/>
    <property type="project" value="UniProtKB-UniRule"/>
</dbReference>
<dbReference type="CDD" id="cd01556">
    <property type="entry name" value="EPSP_synthase"/>
    <property type="match status" value="1"/>
</dbReference>
<dbReference type="FunFam" id="3.65.10.10:FF:000005">
    <property type="entry name" value="3-phosphoshikimate 1-carboxyvinyltransferase"/>
    <property type="match status" value="1"/>
</dbReference>
<dbReference type="FunFam" id="3.65.10.10:FF:000006">
    <property type="entry name" value="3-phosphoshikimate 1-carboxyvinyltransferase"/>
    <property type="match status" value="1"/>
</dbReference>
<dbReference type="Gene3D" id="3.65.10.10">
    <property type="entry name" value="Enolpyruvate transferase domain"/>
    <property type="match status" value="2"/>
</dbReference>
<dbReference type="HAMAP" id="MF_00210">
    <property type="entry name" value="EPSP_synth"/>
    <property type="match status" value="1"/>
</dbReference>
<dbReference type="InterPro" id="IPR001986">
    <property type="entry name" value="Enolpyruvate_Tfrase_dom"/>
</dbReference>
<dbReference type="InterPro" id="IPR036968">
    <property type="entry name" value="Enolpyruvate_Tfrase_sf"/>
</dbReference>
<dbReference type="InterPro" id="IPR006264">
    <property type="entry name" value="EPSP_synthase"/>
</dbReference>
<dbReference type="InterPro" id="IPR023193">
    <property type="entry name" value="EPSP_synthase_CS"/>
</dbReference>
<dbReference type="InterPro" id="IPR013792">
    <property type="entry name" value="RNA3'P_cycl/enolpyr_Trfase_a/b"/>
</dbReference>
<dbReference type="NCBIfam" id="TIGR01356">
    <property type="entry name" value="aroA"/>
    <property type="match status" value="1"/>
</dbReference>
<dbReference type="PANTHER" id="PTHR21090">
    <property type="entry name" value="AROM/DEHYDROQUINATE SYNTHASE"/>
    <property type="match status" value="1"/>
</dbReference>
<dbReference type="PANTHER" id="PTHR21090:SF5">
    <property type="entry name" value="PENTAFUNCTIONAL AROM POLYPEPTIDE"/>
    <property type="match status" value="1"/>
</dbReference>
<dbReference type="Pfam" id="PF00275">
    <property type="entry name" value="EPSP_synthase"/>
    <property type="match status" value="1"/>
</dbReference>
<dbReference type="PIRSF" id="PIRSF000505">
    <property type="entry name" value="EPSPS"/>
    <property type="match status" value="1"/>
</dbReference>
<dbReference type="SUPFAM" id="SSF55205">
    <property type="entry name" value="EPT/RTPC-like"/>
    <property type="match status" value="1"/>
</dbReference>
<dbReference type="PROSITE" id="PS00104">
    <property type="entry name" value="EPSP_SYNTHASE_1"/>
    <property type="match status" value="1"/>
</dbReference>
<evidence type="ECO:0000255" key="1">
    <source>
        <dbReference type="HAMAP-Rule" id="MF_00210"/>
    </source>
</evidence>
<keyword id="KW-0028">Amino-acid biosynthesis</keyword>
<keyword id="KW-0057">Aromatic amino acid biosynthesis</keyword>
<keyword id="KW-0963">Cytoplasm</keyword>
<keyword id="KW-0808">Transferase</keyword>
<proteinExistence type="inferred from homology"/>
<protein>
    <recommendedName>
        <fullName evidence="1">3-phosphoshikimate 1-carboxyvinyltransferase</fullName>
        <ecNumber evidence="1">2.5.1.19</ecNumber>
    </recommendedName>
    <alternativeName>
        <fullName evidence="1">5-enolpyruvylshikimate-3-phosphate synthase</fullName>
        <shortName evidence="1">EPSP synthase</shortName>
        <shortName evidence="1">EPSPS</shortName>
    </alternativeName>
</protein>
<accession>Q6G545</accession>
<sequence length="442" mass="47515">MQKTIPMTAYKSTRLSGIIKIPGDKSISHRSLILGGLASGETHIHGILESDDVFNTAAAMQALGACIIKKDDLWIIRGTGNGCLLAAQKPLDFGNAGTGARLVMGMVGPYHMKTTFIGDASLSKRPMARILDPLQLMGVEIEATHGNYLPLTLYGPKMTNPICYRIPVASAQVKSAILLAGLNTAGTTTVIEPILTRDHTEKMLKAFGAKLEIEKNAEGTRFIHLNGHPHLTGQTIHIPGDPSSAAFPIVAALLIEDSDITIENVLINNSRMGLIETLWEMGAQIELLNQRQTGGEDVANLRVKSSVLKGVTVPKERAPSMIDEYPALAVAAAFAEGKTVMLGIEELRVKESDRLSVLAQGLKINHVDCEEGQDFLIVHGKGSAKGLGGGHVTTHLDHRIAMSFLIFGLVSEKPVTIDDKRMIATSFPEFIPFIQQLGGKIS</sequence>
<organism>
    <name type="scientific">Bartonella henselae (strain ATCC 49882 / DSM 28221 / CCUG 30454 / Houston 1)</name>
    <name type="common">Rochalimaea henselae</name>
    <dbReference type="NCBI Taxonomy" id="283166"/>
    <lineage>
        <taxon>Bacteria</taxon>
        <taxon>Pseudomonadati</taxon>
        <taxon>Pseudomonadota</taxon>
        <taxon>Alphaproteobacteria</taxon>
        <taxon>Hyphomicrobiales</taxon>
        <taxon>Bartonellaceae</taxon>
        <taxon>Bartonella</taxon>
    </lineage>
</organism>
<gene>
    <name evidence="1" type="primary">aroA</name>
    <name type="ordered locus">BH00950</name>
</gene>
<feature type="chain" id="PRO_0000325334" description="3-phosphoshikimate 1-carboxyvinyltransferase">
    <location>
        <begin position="1"/>
        <end position="442"/>
    </location>
</feature>
<feature type="active site" description="Proton acceptor" evidence="1">
    <location>
        <position position="323"/>
    </location>
</feature>
<feature type="binding site" evidence="1">
    <location>
        <position position="25"/>
    </location>
    <ligand>
        <name>3-phosphoshikimate</name>
        <dbReference type="ChEBI" id="CHEBI:145989"/>
    </ligand>
</feature>
<feature type="binding site" evidence="1">
    <location>
        <position position="25"/>
    </location>
    <ligand>
        <name>phosphoenolpyruvate</name>
        <dbReference type="ChEBI" id="CHEBI:58702"/>
    </ligand>
</feature>
<feature type="binding site" evidence="1">
    <location>
        <position position="26"/>
    </location>
    <ligand>
        <name>3-phosphoshikimate</name>
        <dbReference type="ChEBI" id="CHEBI:145989"/>
    </ligand>
</feature>
<feature type="binding site" evidence="1">
    <location>
        <position position="30"/>
    </location>
    <ligand>
        <name>3-phosphoshikimate</name>
        <dbReference type="ChEBI" id="CHEBI:145989"/>
    </ligand>
</feature>
<feature type="binding site" evidence="1">
    <location>
        <position position="97"/>
    </location>
    <ligand>
        <name>phosphoenolpyruvate</name>
        <dbReference type="ChEBI" id="CHEBI:58702"/>
    </ligand>
</feature>
<feature type="binding site" evidence="1">
    <location>
        <position position="125"/>
    </location>
    <ligand>
        <name>phosphoenolpyruvate</name>
        <dbReference type="ChEBI" id="CHEBI:58702"/>
    </ligand>
</feature>
<feature type="binding site" evidence="1">
    <location>
        <position position="170"/>
    </location>
    <ligand>
        <name>3-phosphoshikimate</name>
        <dbReference type="ChEBI" id="CHEBI:145989"/>
    </ligand>
</feature>
<feature type="binding site" evidence="1">
    <location>
        <position position="172"/>
    </location>
    <ligand>
        <name>3-phosphoshikimate</name>
        <dbReference type="ChEBI" id="CHEBI:145989"/>
    </ligand>
</feature>
<feature type="binding site" evidence="1">
    <location>
        <position position="172"/>
    </location>
    <ligand>
        <name>phosphoenolpyruvate</name>
        <dbReference type="ChEBI" id="CHEBI:58702"/>
    </ligand>
</feature>
<feature type="binding site" evidence="1">
    <location>
        <position position="323"/>
    </location>
    <ligand>
        <name>3-phosphoshikimate</name>
        <dbReference type="ChEBI" id="CHEBI:145989"/>
    </ligand>
</feature>
<feature type="binding site" evidence="1">
    <location>
        <position position="350"/>
    </location>
    <ligand>
        <name>3-phosphoshikimate</name>
        <dbReference type="ChEBI" id="CHEBI:145989"/>
    </ligand>
</feature>
<feature type="binding site" evidence="1">
    <location>
        <position position="354"/>
    </location>
    <ligand>
        <name>phosphoenolpyruvate</name>
        <dbReference type="ChEBI" id="CHEBI:58702"/>
    </ligand>
</feature>
<feature type="binding site" evidence="1">
    <location>
        <position position="399"/>
    </location>
    <ligand>
        <name>phosphoenolpyruvate</name>
        <dbReference type="ChEBI" id="CHEBI:58702"/>
    </ligand>
</feature>
<name>AROA_BARHE</name>